<reference key="1">
    <citation type="journal article" date="2001" name="DNA Res.">
        <title>Complete genomic sequence of the filamentous nitrogen-fixing cyanobacterium Anabaena sp. strain PCC 7120.</title>
        <authorList>
            <person name="Kaneko T."/>
            <person name="Nakamura Y."/>
            <person name="Wolk C.P."/>
            <person name="Kuritz T."/>
            <person name="Sasamoto S."/>
            <person name="Watanabe A."/>
            <person name="Iriguchi M."/>
            <person name="Ishikawa A."/>
            <person name="Kawashima K."/>
            <person name="Kimura T."/>
            <person name="Kishida Y."/>
            <person name="Kohara M."/>
            <person name="Matsumoto M."/>
            <person name="Matsuno A."/>
            <person name="Muraki A."/>
            <person name="Nakazaki N."/>
            <person name="Shimpo S."/>
            <person name="Sugimoto M."/>
            <person name="Takazawa M."/>
            <person name="Yamada M."/>
            <person name="Yasuda M."/>
            <person name="Tabata S."/>
        </authorList>
    </citation>
    <scope>NUCLEOTIDE SEQUENCE [LARGE SCALE GENOMIC DNA]</scope>
    <source>
        <strain>PCC 7120 / SAG 25.82 / UTEX 2576</strain>
    </source>
</reference>
<gene>
    <name evidence="1" type="primary">ybeY</name>
    <name type="ordered locus">all0271</name>
</gene>
<keyword id="KW-0963">Cytoplasm</keyword>
<keyword id="KW-0255">Endonuclease</keyword>
<keyword id="KW-0378">Hydrolase</keyword>
<keyword id="KW-0479">Metal-binding</keyword>
<keyword id="KW-0540">Nuclease</keyword>
<keyword id="KW-1185">Reference proteome</keyword>
<keyword id="KW-0690">Ribosome biogenesis</keyword>
<keyword id="KW-0698">rRNA processing</keyword>
<keyword id="KW-0862">Zinc</keyword>
<proteinExistence type="inferred from homology"/>
<evidence type="ECO:0000255" key="1">
    <source>
        <dbReference type="HAMAP-Rule" id="MF_00009"/>
    </source>
</evidence>
<feature type="chain" id="PRO_0000102399" description="Endoribonuclease YbeY">
    <location>
        <begin position="1"/>
        <end position="184"/>
    </location>
</feature>
<feature type="binding site" evidence="1">
    <location>
        <position position="146"/>
    </location>
    <ligand>
        <name>Zn(2+)</name>
        <dbReference type="ChEBI" id="CHEBI:29105"/>
        <note>catalytic</note>
    </ligand>
</feature>
<feature type="binding site" evidence="1">
    <location>
        <position position="150"/>
    </location>
    <ligand>
        <name>Zn(2+)</name>
        <dbReference type="ChEBI" id="CHEBI:29105"/>
        <note>catalytic</note>
    </ligand>
</feature>
<feature type="binding site" evidence="1">
    <location>
        <position position="156"/>
    </location>
    <ligand>
        <name>Zn(2+)</name>
        <dbReference type="ChEBI" id="CHEBI:29105"/>
        <note>catalytic</note>
    </ligand>
</feature>
<accession>Q8Z032</accession>
<sequence>MLSEESGYLVQVELDVQDCFFESFPEAAQASGYMDSQVSPATWQDWFHRWLEILDSSLPPAPSYEIGLRLTDDTEIQAINAQYRQQNKPTDVLAFAALEVDLPQNPEMVAEPLYLGDIVVSINTAQRQAGQQEHSLSTELAWLTAHGLLHLLGWDHPDEESLIAMLQQQVVLLEAIGININVNY</sequence>
<dbReference type="EC" id="3.1.-.-" evidence="1"/>
<dbReference type="EMBL" id="BA000019">
    <property type="protein sequence ID" value="BAB77795.1"/>
    <property type="molecule type" value="Genomic_DNA"/>
</dbReference>
<dbReference type="PIR" id="AG1840">
    <property type="entry name" value="AG1840"/>
</dbReference>
<dbReference type="SMR" id="Q8Z032"/>
<dbReference type="STRING" id="103690.gene:10492279"/>
<dbReference type="KEGG" id="ana:all0271"/>
<dbReference type="eggNOG" id="COG0319">
    <property type="taxonomic scope" value="Bacteria"/>
</dbReference>
<dbReference type="Proteomes" id="UP000002483">
    <property type="component" value="Chromosome"/>
</dbReference>
<dbReference type="GO" id="GO:0005737">
    <property type="term" value="C:cytoplasm"/>
    <property type="evidence" value="ECO:0007669"/>
    <property type="project" value="UniProtKB-SubCell"/>
</dbReference>
<dbReference type="GO" id="GO:0004222">
    <property type="term" value="F:metalloendopeptidase activity"/>
    <property type="evidence" value="ECO:0007669"/>
    <property type="project" value="InterPro"/>
</dbReference>
<dbReference type="GO" id="GO:0004521">
    <property type="term" value="F:RNA endonuclease activity"/>
    <property type="evidence" value="ECO:0007669"/>
    <property type="project" value="UniProtKB-UniRule"/>
</dbReference>
<dbReference type="GO" id="GO:0008270">
    <property type="term" value="F:zinc ion binding"/>
    <property type="evidence" value="ECO:0007669"/>
    <property type="project" value="UniProtKB-UniRule"/>
</dbReference>
<dbReference type="GO" id="GO:0006364">
    <property type="term" value="P:rRNA processing"/>
    <property type="evidence" value="ECO:0007669"/>
    <property type="project" value="UniProtKB-UniRule"/>
</dbReference>
<dbReference type="Gene3D" id="3.40.390.30">
    <property type="entry name" value="Metalloproteases ('zincins'), catalytic domain"/>
    <property type="match status" value="1"/>
</dbReference>
<dbReference type="HAMAP" id="MF_00009">
    <property type="entry name" value="Endoribonucl_YbeY"/>
    <property type="match status" value="1"/>
</dbReference>
<dbReference type="InterPro" id="IPR023091">
    <property type="entry name" value="MetalPrtase_cat_dom_sf_prd"/>
</dbReference>
<dbReference type="InterPro" id="IPR002036">
    <property type="entry name" value="YbeY"/>
</dbReference>
<dbReference type="InterPro" id="IPR020549">
    <property type="entry name" value="YbeY_CS"/>
</dbReference>
<dbReference type="NCBIfam" id="TIGR00043">
    <property type="entry name" value="rRNA maturation RNase YbeY"/>
    <property type="match status" value="1"/>
</dbReference>
<dbReference type="PANTHER" id="PTHR46986">
    <property type="entry name" value="ENDORIBONUCLEASE YBEY, CHLOROPLASTIC"/>
    <property type="match status" value="1"/>
</dbReference>
<dbReference type="PANTHER" id="PTHR46986:SF1">
    <property type="entry name" value="ENDORIBONUCLEASE YBEY, CHLOROPLASTIC"/>
    <property type="match status" value="1"/>
</dbReference>
<dbReference type="Pfam" id="PF02130">
    <property type="entry name" value="YbeY"/>
    <property type="match status" value="1"/>
</dbReference>
<dbReference type="SUPFAM" id="SSF55486">
    <property type="entry name" value="Metalloproteases ('zincins'), catalytic domain"/>
    <property type="match status" value="1"/>
</dbReference>
<dbReference type="PROSITE" id="PS01306">
    <property type="entry name" value="UPF0054"/>
    <property type="match status" value="1"/>
</dbReference>
<comment type="function">
    <text evidence="1">Single strand-specific metallo-endoribonuclease involved in late-stage 70S ribosome quality control and in maturation of the 3' terminus of the 16S rRNA.</text>
</comment>
<comment type="cofactor">
    <cofactor evidence="1">
        <name>Zn(2+)</name>
        <dbReference type="ChEBI" id="CHEBI:29105"/>
    </cofactor>
    <text evidence="1">Binds 1 zinc ion.</text>
</comment>
<comment type="subcellular location">
    <subcellularLocation>
        <location evidence="1">Cytoplasm</location>
    </subcellularLocation>
</comment>
<comment type="similarity">
    <text evidence="1">Belongs to the endoribonuclease YbeY family.</text>
</comment>
<organism>
    <name type="scientific">Nostoc sp. (strain PCC 7120 / SAG 25.82 / UTEX 2576)</name>
    <dbReference type="NCBI Taxonomy" id="103690"/>
    <lineage>
        <taxon>Bacteria</taxon>
        <taxon>Bacillati</taxon>
        <taxon>Cyanobacteriota</taxon>
        <taxon>Cyanophyceae</taxon>
        <taxon>Nostocales</taxon>
        <taxon>Nostocaceae</taxon>
        <taxon>Nostoc</taxon>
    </lineage>
</organism>
<name>YBEY_NOSS1</name>
<protein>
    <recommendedName>
        <fullName evidence="1">Endoribonuclease YbeY</fullName>
        <ecNumber evidence="1">3.1.-.-</ecNumber>
    </recommendedName>
</protein>